<sequence length="457" mass="48549">MKLGISGGAGEAMEGELSFVSPARSSCFSFEGGGSGSPTWVSTVEALLRSPTSSVSDGGGGGGGGYNSPARASSPLQKQIPYCRDAGDFSSLTWASTLEKPLESPSSCISDGRGGGFGSPTSAFPPEKLLISPPTCVSDNRGVGNVGGFPSLPWASSLERLLTSPSSCVSDSRGVGNADGFPSLPWASSLEKPLTSPSSCVSDGRSGGYSSPLGASAEREREVREAEMLLRAIAERYDDCFLRLRDAAAELSDLHRERLRLAAENLHLSLLLEELESEQRKQASAMAPPKLEEDEAAQGGAPKSISIRSPGYLSQKPPQGQARPQRLRVRASQAMEISHPNCLIFVMGNQCSPKEAAAAGDEEDEEDKGGGEVEVEAYRQGAAKTELCNKWERGACPYGARCRFAHGLQELRPVIRHPRYKTLPCQMFAAASGCPYGHRCHFRHSPLRAAAAESFCY</sequence>
<gene>
    <name type="ordered locus">Os03g0301500</name>
    <name type="ordered locus">LOC_Os03g18950</name>
    <name type="ORF">OsJ_010105</name>
</gene>
<keyword id="KW-0175">Coiled coil</keyword>
<keyword id="KW-0238">DNA-binding</keyword>
<keyword id="KW-0479">Metal-binding</keyword>
<keyword id="KW-1185">Reference proteome</keyword>
<keyword id="KW-0677">Repeat</keyword>
<keyword id="KW-0862">Zinc</keyword>
<keyword id="KW-0863">Zinc-finger</keyword>
<organism>
    <name type="scientific">Oryza sativa subsp. japonica</name>
    <name type="common">Rice</name>
    <dbReference type="NCBI Taxonomy" id="39947"/>
    <lineage>
        <taxon>Eukaryota</taxon>
        <taxon>Viridiplantae</taxon>
        <taxon>Streptophyta</taxon>
        <taxon>Embryophyta</taxon>
        <taxon>Tracheophyta</taxon>
        <taxon>Spermatophyta</taxon>
        <taxon>Magnoliopsida</taxon>
        <taxon>Liliopsida</taxon>
        <taxon>Poales</taxon>
        <taxon>Poaceae</taxon>
        <taxon>BOP clade</taxon>
        <taxon>Oryzoideae</taxon>
        <taxon>Oryzeae</taxon>
        <taxon>Oryzinae</taxon>
        <taxon>Oryza</taxon>
        <taxon>Oryza sativa</taxon>
    </lineage>
</organism>
<protein>
    <recommendedName>
        <fullName>Putative zinc finger CCCH domain-containing protein 21</fullName>
        <shortName>OsC3H21</shortName>
    </recommendedName>
</protein>
<proteinExistence type="predicted"/>
<name>C3H21_ORYSJ</name>
<accession>Q10MN8</accession>
<feature type="chain" id="PRO_0000346817" description="Putative zinc finger CCCH domain-containing protein 21">
    <location>
        <begin position="1"/>
        <end position="457"/>
    </location>
</feature>
<feature type="zinc finger region" description="C3H1-type 1" evidence="2">
    <location>
        <begin position="382"/>
        <end position="409"/>
    </location>
</feature>
<feature type="zinc finger region" description="C3H1-type 2" evidence="2">
    <location>
        <begin position="419"/>
        <end position="447"/>
    </location>
</feature>
<feature type="region of interest" description="Disordered" evidence="3">
    <location>
        <begin position="51"/>
        <end position="73"/>
    </location>
</feature>
<feature type="region of interest" description="Disordered" evidence="3">
    <location>
        <begin position="102"/>
        <end position="130"/>
    </location>
</feature>
<feature type="region of interest" description="Disordered" evidence="3">
    <location>
        <begin position="195"/>
        <end position="221"/>
    </location>
</feature>
<feature type="region of interest" description="Disordered" evidence="3">
    <location>
        <begin position="280"/>
        <end position="329"/>
    </location>
</feature>
<feature type="coiled-coil region" evidence="1">
    <location>
        <begin position="215"/>
        <end position="276"/>
    </location>
</feature>
<feature type="compositionally biased region" description="Gly residues" evidence="3">
    <location>
        <begin position="57"/>
        <end position="66"/>
    </location>
</feature>
<dbReference type="EMBL" id="DP000009">
    <property type="protein sequence ID" value="ABF95487.1"/>
    <property type="molecule type" value="Genomic_DNA"/>
</dbReference>
<dbReference type="EMBL" id="AP008209">
    <property type="status" value="NOT_ANNOTATED_CDS"/>
    <property type="molecule type" value="Genomic_DNA"/>
</dbReference>
<dbReference type="EMBL" id="AP014959">
    <property type="status" value="NOT_ANNOTATED_CDS"/>
    <property type="molecule type" value="Genomic_DNA"/>
</dbReference>
<dbReference type="EMBL" id="CM000140">
    <property type="status" value="NOT_ANNOTATED_CDS"/>
    <property type="molecule type" value="Genomic_DNA"/>
</dbReference>
<dbReference type="SMR" id="Q10MN8"/>
<dbReference type="FunCoup" id="Q10MN8">
    <property type="interactions" value="737"/>
</dbReference>
<dbReference type="STRING" id="39947.Q10MN8"/>
<dbReference type="PaxDb" id="39947-Q10MN8"/>
<dbReference type="eggNOG" id="KOG1677">
    <property type="taxonomic scope" value="Eukaryota"/>
</dbReference>
<dbReference type="InParanoid" id="Q10MN8"/>
<dbReference type="Proteomes" id="UP000000763">
    <property type="component" value="Chromosome 3"/>
</dbReference>
<dbReference type="Proteomes" id="UP000007752">
    <property type="component" value="Chromosome 3"/>
</dbReference>
<dbReference type="Proteomes" id="UP000059680">
    <property type="component" value="Chromosome 3"/>
</dbReference>
<dbReference type="GO" id="GO:0003677">
    <property type="term" value="F:DNA binding"/>
    <property type="evidence" value="ECO:0007669"/>
    <property type="project" value="UniProtKB-KW"/>
</dbReference>
<dbReference type="GO" id="GO:0003729">
    <property type="term" value="F:mRNA binding"/>
    <property type="evidence" value="ECO:0007669"/>
    <property type="project" value="InterPro"/>
</dbReference>
<dbReference type="GO" id="GO:0008270">
    <property type="term" value="F:zinc ion binding"/>
    <property type="evidence" value="ECO:0007669"/>
    <property type="project" value="UniProtKB-KW"/>
</dbReference>
<dbReference type="FunFam" id="4.10.1000.10:FF:000001">
    <property type="entry name" value="zinc finger CCCH domain-containing protein 15-like"/>
    <property type="match status" value="1"/>
</dbReference>
<dbReference type="FunFam" id="4.10.1000.10:FF:000002">
    <property type="entry name" value="Zinc finger protein 36, C3H1 type-like 1"/>
    <property type="match status" value="1"/>
</dbReference>
<dbReference type="Gene3D" id="4.10.1000.10">
    <property type="entry name" value="Zinc finger, CCCH-type"/>
    <property type="match status" value="2"/>
</dbReference>
<dbReference type="InterPro" id="IPR045877">
    <property type="entry name" value="ZFP36-like"/>
</dbReference>
<dbReference type="InterPro" id="IPR000571">
    <property type="entry name" value="Znf_CCCH"/>
</dbReference>
<dbReference type="InterPro" id="IPR036855">
    <property type="entry name" value="Znf_CCCH_sf"/>
</dbReference>
<dbReference type="PANTHER" id="PTHR12547">
    <property type="entry name" value="CCCH ZINC FINGER/TIS11-RELATED"/>
    <property type="match status" value="1"/>
</dbReference>
<dbReference type="PANTHER" id="PTHR12547:SF150">
    <property type="entry name" value="ZINC FINGER CCCH DOMAIN-CONTAINING PROTEIN 47"/>
    <property type="match status" value="1"/>
</dbReference>
<dbReference type="Pfam" id="PF00642">
    <property type="entry name" value="zf-CCCH"/>
    <property type="match status" value="1"/>
</dbReference>
<dbReference type="SMART" id="SM00356">
    <property type="entry name" value="ZnF_C3H1"/>
    <property type="match status" value="2"/>
</dbReference>
<dbReference type="SUPFAM" id="SSF90229">
    <property type="entry name" value="CCCH zinc finger"/>
    <property type="match status" value="2"/>
</dbReference>
<dbReference type="PROSITE" id="PS50103">
    <property type="entry name" value="ZF_C3H1"/>
    <property type="match status" value="2"/>
</dbReference>
<evidence type="ECO:0000255" key="1"/>
<evidence type="ECO:0000255" key="2">
    <source>
        <dbReference type="PROSITE-ProRule" id="PRU00723"/>
    </source>
</evidence>
<evidence type="ECO:0000256" key="3">
    <source>
        <dbReference type="SAM" id="MobiDB-lite"/>
    </source>
</evidence>
<reference key="1">
    <citation type="journal article" date="2005" name="Genome Res.">
        <title>Sequence, annotation, and analysis of synteny between rice chromosome 3 and diverged grass species.</title>
        <authorList>
            <consortium name="The rice chromosome 3 sequencing consortium"/>
            <person name="Buell C.R."/>
            <person name="Yuan Q."/>
            <person name="Ouyang S."/>
            <person name="Liu J."/>
            <person name="Zhu W."/>
            <person name="Wang A."/>
            <person name="Maiti R."/>
            <person name="Haas B."/>
            <person name="Wortman J."/>
            <person name="Pertea M."/>
            <person name="Jones K.M."/>
            <person name="Kim M."/>
            <person name="Overton L."/>
            <person name="Tsitrin T."/>
            <person name="Fadrosh D."/>
            <person name="Bera J."/>
            <person name="Weaver B."/>
            <person name="Jin S."/>
            <person name="Johri S."/>
            <person name="Reardon M."/>
            <person name="Webb K."/>
            <person name="Hill J."/>
            <person name="Moffat K."/>
            <person name="Tallon L."/>
            <person name="Van Aken S."/>
            <person name="Lewis M."/>
            <person name="Utterback T."/>
            <person name="Feldblyum T."/>
            <person name="Zismann V."/>
            <person name="Iobst S."/>
            <person name="Hsiao J."/>
            <person name="de Vazeille A.R."/>
            <person name="Salzberg S.L."/>
            <person name="White O."/>
            <person name="Fraser C.M."/>
            <person name="Yu Y."/>
            <person name="Kim H."/>
            <person name="Rambo T."/>
            <person name="Currie J."/>
            <person name="Collura K."/>
            <person name="Kernodle-Thompson S."/>
            <person name="Wei F."/>
            <person name="Kudrna K."/>
            <person name="Ammiraju J.S.S."/>
            <person name="Luo M."/>
            <person name="Goicoechea J.L."/>
            <person name="Wing R.A."/>
            <person name="Henry D."/>
            <person name="Oates R."/>
            <person name="Palmer M."/>
            <person name="Pries G."/>
            <person name="Saski C."/>
            <person name="Simmons J."/>
            <person name="Soderlund C."/>
            <person name="Nelson W."/>
            <person name="de la Bastide M."/>
            <person name="Spiegel L."/>
            <person name="Nascimento L."/>
            <person name="Huang E."/>
            <person name="Preston R."/>
            <person name="Zutavern T."/>
            <person name="Palmer L."/>
            <person name="O'Shaughnessy A."/>
            <person name="Dike S."/>
            <person name="McCombie W.R."/>
            <person name="Minx P."/>
            <person name="Cordum H."/>
            <person name="Wilson R."/>
            <person name="Jin W."/>
            <person name="Lee H.R."/>
            <person name="Jiang J."/>
            <person name="Jackson S."/>
        </authorList>
    </citation>
    <scope>NUCLEOTIDE SEQUENCE [LARGE SCALE GENOMIC DNA]</scope>
    <source>
        <strain>cv. Nipponbare</strain>
    </source>
</reference>
<reference key="2">
    <citation type="journal article" date="2005" name="Nature">
        <title>The map-based sequence of the rice genome.</title>
        <authorList>
            <consortium name="International rice genome sequencing project (IRGSP)"/>
        </authorList>
    </citation>
    <scope>NUCLEOTIDE SEQUENCE [LARGE SCALE GENOMIC DNA]</scope>
    <source>
        <strain>cv. Nipponbare</strain>
    </source>
</reference>
<reference key="3">
    <citation type="journal article" date="2008" name="Nucleic Acids Res.">
        <title>The rice annotation project database (RAP-DB): 2008 update.</title>
        <authorList>
            <consortium name="The rice annotation project (RAP)"/>
        </authorList>
    </citation>
    <scope>GENOME REANNOTATION</scope>
    <source>
        <strain>cv. Nipponbare</strain>
    </source>
</reference>
<reference key="4">
    <citation type="journal article" date="2013" name="Rice">
        <title>Improvement of the Oryza sativa Nipponbare reference genome using next generation sequence and optical map data.</title>
        <authorList>
            <person name="Kawahara Y."/>
            <person name="de la Bastide M."/>
            <person name="Hamilton J.P."/>
            <person name="Kanamori H."/>
            <person name="McCombie W.R."/>
            <person name="Ouyang S."/>
            <person name="Schwartz D.C."/>
            <person name="Tanaka T."/>
            <person name="Wu J."/>
            <person name="Zhou S."/>
            <person name="Childs K.L."/>
            <person name="Davidson R.M."/>
            <person name="Lin H."/>
            <person name="Quesada-Ocampo L."/>
            <person name="Vaillancourt B."/>
            <person name="Sakai H."/>
            <person name="Lee S.S."/>
            <person name="Kim J."/>
            <person name="Numa H."/>
            <person name="Itoh T."/>
            <person name="Buell C.R."/>
            <person name="Matsumoto T."/>
        </authorList>
    </citation>
    <scope>GENOME REANNOTATION</scope>
    <source>
        <strain>cv. Nipponbare</strain>
    </source>
</reference>
<reference key="5">
    <citation type="journal article" date="2005" name="PLoS Biol.">
        <title>The genomes of Oryza sativa: a history of duplications.</title>
        <authorList>
            <person name="Yu J."/>
            <person name="Wang J."/>
            <person name="Lin W."/>
            <person name="Li S."/>
            <person name="Li H."/>
            <person name="Zhou J."/>
            <person name="Ni P."/>
            <person name="Dong W."/>
            <person name="Hu S."/>
            <person name="Zeng C."/>
            <person name="Zhang J."/>
            <person name="Zhang Y."/>
            <person name="Li R."/>
            <person name="Xu Z."/>
            <person name="Li S."/>
            <person name="Li X."/>
            <person name="Zheng H."/>
            <person name="Cong L."/>
            <person name="Lin L."/>
            <person name="Yin J."/>
            <person name="Geng J."/>
            <person name="Li G."/>
            <person name="Shi J."/>
            <person name="Liu J."/>
            <person name="Lv H."/>
            <person name="Li J."/>
            <person name="Wang J."/>
            <person name="Deng Y."/>
            <person name="Ran L."/>
            <person name="Shi X."/>
            <person name="Wang X."/>
            <person name="Wu Q."/>
            <person name="Li C."/>
            <person name="Ren X."/>
            <person name="Wang J."/>
            <person name="Wang X."/>
            <person name="Li D."/>
            <person name="Liu D."/>
            <person name="Zhang X."/>
            <person name="Ji Z."/>
            <person name="Zhao W."/>
            <person name="Sun Y."/>
            <person name="Zhang Z."/>
            <person name="Bao J."/>
            <person name="Han Y."/>
            <person name="Dong L."/>
            <person name="Ji J."/>
            <person name="Chen P."/>
            <person name="Wu S."/>
            <person name="Liu J."/>
            <person name="Xiao Y."/>
            <person name="Bu D."/>
            <person name="Tan J."/>
            <person name="Yang L."/>
            <person name="Ye C."/>
            <person name="Zhang J."/>
            <person name="Xu J."/>
            <person name="Zhou Y."/>
            <person name="Yu Y."/>
            <person name="Zhang B."/>
            <person name="Zhuang S."/>
            <person name="Wei H."/>
            <person name="Liu B."/>
            <person name="Lei M."/>
            <person name="Yu H."/>
            <person name="Li Y."/>
            <person name="Xu H."/>
            <person name="Wei S."/>
            <person name="He X."/>
            <person name="Fang L."/>
            <person name="Zhang Z."/>
            <person name="Zhang Y."/>
            <person name="Huang X."/>
            <person name="Su Z."/>
            <person name="Tong W."/>
            <person name="Li J."/>
            <person name="Tong Z."/>
            <person name="Li S."/>
            <person name="Ye J."/>
            <person name="Wang L."/>
            <person name="Fang L."/>
            <person name="Lei T."/>
            <person name="Chen C.-S."/>
            <person name="Chen H.-C."/>
            <person name="Xu Z."/>
            <person name="Li H."/>
            <person name="Huang H."/>
            <person name="Zhang F."/>
            <person name="Xu H."/>
            <person name="Li N."/>
            <person name="Zhao C."/>
            <person name="Li S."/>
            <person name="Dong L."/>
            <person name="Huang Y."/>
            <person name="Li L."/>
            <person name="Xi Y."/>
            <person name="Qi Q."/>
            <person name="Li W."/>
            <person name="Zhang B."/>
            <person name="Hu W."/>
            <person name="Zhang Y."/>
            <person name="Tian X."/>
            <person name="Jiao Y."/>
            <person name="Liang X."/>
            <person name="Jin J."/>
            <person name="Gao L."/>
            <person name="Zheng W."/>
            <person name="Hao B."/>
            <person name="Liu S.-M."/>
            <person name="Wang W."/>
            <person name="Yuan L."/>
            <person name="Cao M."/>
            <person name="McDermott J."/>
            <person name="Samudrala R."/>
            <person name="Wang J."/>
            <person name="Wong G.K.-S."/>
            <person name="Yang H."/>
        </authorList>
    </citation>
    <scope>NUCLEOTIDE SEQUENCE [LARGE SCALE GENOMIC DNA]</scope>
    <source>
        <strain>cv. Nipponbare</strain>
    </source>
</reference>
<reference key="6">
    <citation type="journal article" date="2008" name="BMC Genomics">
        <title>Genome-wide analysis of CCCH zinc finger family in Arabidopsis and rice.</title>
        <authorList>
            <person name="Wang D."/>
            <person name="Guo Y."/>
            <person name="Wu C."/>
            <person name="Yang G."/>
            <person name="Li Y."/>
            <person name="Zheng C."/>
        </authorList>
    </citation>
    <scope>NOMENCLATURE</scope>
</reference>